<protein>
    <recommendedName>
        <fullName>Putative 8-amino-7-oxononanoate synthase</fullName>
        <shortName>AONS</shortName>
        <ecNumber>2.3.1.47</ecNumber>
    </recommendedName>
    <alternativeName>
        <fullName>7-keto-8-amino-pelargonic acid synthase</fullName>
        <shortName>7-KAP synthase</shortName>
    </alternativeName>
    <alternativeName>
        <fullName>8-amino-7-ketopelargonate synthase</fullName>
    </alternativeName>
</protein>
<evidence type="ECO:0000250" key="1"/>
<evidence type="ECO:0000305" key="2"/>
<name>BIOF_GLOC7</name>
<organism>
    <name type="scientific">Gloeothece citriformis (strain PCC 7424)</name>
    <name type="common">Cyanothece sp. (strain PCC 7424)</name>
    <dbReference type="NCBI Taxonomy" id="65393"/>
    <lineage>
        <taxon>Bacteria</taxon>
        <taxon>Bacillati</taxon>
        <taxon>Cyanobacteriota</taxon>
        <taxon>Cyanophyceae</taxon>
        <taxon>Oscillatoriophycideae</taxon>
        <taxon>Chroococcales</taxon>
        <taxon>Aphanothecaceae</taxon>
        <taxon>Gloeothece</taxon>
        <taxon>Gloeothece citriformis</taxon>
    </lineage>
</organism>
<keyword id="KW-0093">Biotin biosynthesis</keyword>
<keyword id="KW-0663">Pyridoxal phosphate</keyword>
<keyword id="KW-1185">Reference proteome</keyword>
<keyword id="KW-0808">Transferase</keyword>
<accession>B7KD70</accession>
<comment type="function">
    <text evidence="1">Catalyzes the decarboxylative condensation of pimeloyl-[acyl-carrier protein] and L-alanine to produce 8-amino-7-oxononanoate (AON), [acyl-carrier protein], and carbon dioxide.</text>
</comment>
<comment type="catalytic activity">
    <reaction>
        <text>6-carboxyhexanoyl-[ACP] + L-alanine + H(+) = (8S)-8-amino-7-oxononanoate + holo-[ACP] + CO2</text>
        <dbReference type="Rhea" id="RHEA:42288"/>
        <dbReference type="Rhea" id="RHEA-COMP:9685"/>
        <dbReference type="Rhea" id="RHEA-COMP:9955"/>
        <dbReference type="ChEBI" id="CHEBI:15378"/>
        <dbReference type="ChEBI" id="CHEBI:16526"/>
        <dbReference type="ChEBI" id="CHEBI:57972"/>
        <dbReference type="ChEBI" id="CHEBI:64479"/>
        <dbReference type="ChEBI" id="CHEBI:78846"/>
        <dbReference type="ChEBI" id="CHEBI:149468"/>
        <dbReference type="EC" id="2.3.1.47"/>
    </reaction>
</comment>
<comment type="cofactor">
    <cofactor evidence="1">
        <name>pyridoxal 5'-phosphate</name>
        <dbReference type="ChEBI" id="CHEBI:597326"/>
    </cofactor>
</comment>
<comment type="pathway">
    <text>Cofactor biosynthesis; biotin biosynthesis.</text>
</comment>
<comment type="subunit">
    <text evidence="1">Homodimer.</text>
</comment>
<comment type="similarity">
    <text evidence="2">Belongs to the class-II pyridoxal-phosphate-dependent aminotransferase family. BioF subfamily.</text>
</comment>
<proteinExistence type="inferred from homology"/>
<reference key="1">
    <citation type="journal article" date="2011" name="MBio">
        <title>Novel metabolic attributes of the genus Cyanothece, comprising a group of unicellular nitrogen-fixing Cyanobacteria.</title>
        <authorList>
            <person name="Bandyopadhyay A."/>
            <person name="Elvitigala T."/>
            <person name="Welsh E."/>
            <person name="Stockel J."/>
            <person name="Liberton M."/>
            <person name="Min H."/>
            <person name="Sherman L.A."/>
            <person name="Pakrasi H.B."/>
        </authorList>
    </citation>
    <scope>NUCLEOTIDE SEQUENCE [LARGE SCALE GENOMIC DNA]</scope>
    <source>
        <strain>PCC 7424</strain>
    </source>
</reference>
<gene>
    <name type="primary">bioF</name>
    <name type="ordered locus">PCC7424_4834</name>
</gene>
<feature type="chain" id="PRO_0000380960" description="Putative 8-amino-7-oxononanoate synthase">
    <location>
        <begin position="1"/>
        <end position="380"/>
    </location>
</feature>
<feature type="binding site" evidence="1">
    <location>
        <position position="22"/>
    </location>
    <ligand>
        <name>substrate</name>
    </ligand>
</feature>
<feature type="binding site" evidence="1">
    <location>
        <begin position="109"/>
        <end position="110"/>
    </location>
    <ligand>
        <name>pyridoxal 5'-phosphate</name>
        <dbReference type="ChEBI" id="CHEBI:597326"/>
    </ligand>
</feature>
<feature type="binding site" evidence="1">
    <location>
        <position position="134"/>
    </location>
    <ligand>
        <name>substrate</name>
    </ligand>
</feature>
<feature type="binding site" evidence="1">
    <location>
        <position position="182"/>
    </location>
    <ligand>
        <name>pyridoxal 5'-phosphate</name>
        <dbReference type="ChEBI" id="CHEBI:597326"/>
    </ligand>
</feature>
<feature type="binding site" evidence="1">
    <location>
        <begin position="207"/>
        <end position="210"/>
    </location>
    <ligand>
        <name>pyridoxal 5'-phosphate</name>
        <dbReference type="ChEBI" id="CHEBI:597326"/>
    </ligand>
</feature>
<feature type="binding site" evidence="1">
    <location>
        <begin position="238"/>
        <end position="241"/>
    </location>
    <ligand>
        <name>pyridoxal 5'-phosphate</name>
        <dbReference type="ChEBI" id="CHEBI:597326"/>
    </ligand>
</feature>
<feature type="binding site" evidence="1">
    <location>
        <position position="353"/>
    </location>
    <ligand>
        <name>substrate</name>
    </ligand>
</feature>
<feature type="modified residue" description="N6-(pyridoxal phosphate)lysine" evidence="1">
    <location>
        <position position="241"/>
    </location>
</feature>
<dbReference type="EC" id="2.3.1.47"/>
<dbReference type="EMBL" id="CP001291">
    <property type="protein sequence ID" value="ACK73191.1"/>
    <property type="molecule type" value="Genomic_DNA"/>
</dbReference>
<dbReference type="RefSeq" id="WP_015956773.1">
    <property type="nucleotide sequence ID" value="NC_011729.1"/>
</dbReference>
<dbReference type="SMR" id="B7KD70"/>
<dbReference type="STRING" id="65393.PCC7424_4834"/>
<dbReference type="KEGG" id="cyc:PCC7424_4834"/>
<dbReference type="eggNOG" id="COG0156">
    <property type="taxonomic scope" value="Bacteria"/>
</dbReference>
<dbReference type="HOGENOM" id="CLU_015846_11_0_3"/>
<dbReference type="OrthoDB" id="9807157at2"/>
<dbReference type="UniPathway" id="UPA00078"/>
<dbReference type="Proteomes" id="UP000002384">
    <property type="component" value="Chromosome"/>
</dbReference>
<dbReference type="GO" id="GO:0008710">
    <property type="term" value="F:8-amino-7-oxononanoate synthase activity"/>
    <property type="evidence" value="ECO:0007669"/>
    <property type="project" value="UniProtKB-EC"/>
</dbReference>
<dbReference type="GO" id="GO:0030170">
    <property type="term" value="F:pyridoxal phosphate binding"/>
    <property type="evidence" value="ECO:0007669"/>
    <property type="project" value="InterPro"/>
</dbReference>
<dbReference type="GO" id="GO:0009102">
    <property type="term" value="P:biotin biosynthetic process"/>
    <property type="evidence" value="ECO:0007669"/>
    <property type="project" value="UniProtKB-UniPathway"/>
</dbReference>
<dbReference type="CDD" id="cd06454">
    <property type="entry name" value="KBL_like"/>
    <property type="match status" value="1"/>
</dbReference>
<dbReference type="Gene3D" id="3.90.1150.10">
    <property type="entry name" value="Aspartate Aminotransferase, domain 1"/>
    <property type="match status" value="1"/>
</dbReference>
<dbReference type="Gene3D" id="3.40.640.10">
    <property type="entry name" value="Type I PLP-dependent aspartate aminotransferase-like (Major domain)"/>
    <property type="match status" value="1"/>
</dbReference>
<dbReference type="InterPro" id="IPR001917">
    <property type="entry name" value="Aminotrans_II_pyridoxalP_BS"/>
</dbReference>
<dbReference type="InterPro" id="IPR004839">
    <property type="entry name" value="Aminotransferase_I/II_large"/>
</dbReference>
<dbReference type="InterPro" id="IPR050087">
    <property type="entry name" value="AON_synthase_class-II"/>
</dbReference>
<dbReference type="InterPro" id="IPR004723">
    <property type="entry name" value="AONS_Archaea/Proteobacteria"/>
</dbReference>
<dbReference type="InterPro" id="IPR015424">
    <property type="entry name" value="PyrdxlP-dep_Trfase"/>
</dbReference>
<dbReference type="InterPro" id="IPR015421">
    <property type="entry name" value="PyrdxlP-dep_Trfase_major"/>
</dbReference>
<dbReference type="InterPro" id="IPR015422">
    <property type="entry name" value="PyrdxlP-dep_Trfase_small"/>
</dbReference>
<dbReference type="NCBIfam" id="TIGR00858">
    <property type="entry name" value="bioF"/>
    <property type="match status" value="1"/>
</dbReference>
<dbReference type="PANTHER" id="PTHR13693:SF100">
    <property type="entry name" value="8-AMINO-7-OXONONANOATE SYNTHASE"/>
    <property type="match status" value="1"/>
</dbReference>
<dbReference type="PANTHER" id="PTHR13693">
    <property type="entry name" value="CLASS II AMINOTRANSFERASE/8-AMINO-7-OXONONANOATE SYNTHASE"/>
    <property type="match status" value="1"/>
</dbReference>
<dbReference type="Pfam" id="PF00155">
    <property type="entry name" value="Aminotran_1_2"/>
    <property type="match status" value="1"/>
</dbReference>
<dbReference type="SUPFAM" id="SSF53383">
    <property type="entry name" value="PLP-dependent transferases"/>
    <property type="match status" value="1"/>
</dbReference>
<dbReference type="PROSITE" id="PS00599">
    <property type="entry name" value="AA_TRANSFER_CLASS_2"/>
    <property type="match status" value="1"/>
</dbReference>
<sequence length="380" mass="41548">MTNPYNWIEKSLETLHKANWYRSVKTIHSRSGSVVNLKGNLVINFASNDYLGLAGDERLINASIDAIKQYGTGSTGSRLLSGHRPIHRELENAIASFKQTEDAIVFSSGYLANLGTITALVGQRDLILGDEYNHSSLKNGSKLSGATVLDYEHGNLEDLNTKLVNYRRSYRRCLILTDTVFSMDGDICPLPQLLDLAEDFNCMVLVDEAHATGVMGKTGAGCVEHLNCSGRELIQMGTLSKALGSLGGYVAGSFQLVEFLRNRAATWIYTTGLSPGDTAAALTALNIIQAEPQRRQQLWENVGLLKEQLSGFNLFPSETPIICLGLNTPTEALILAQKLQDGGIFAPAIRPPTVPTSRIRFTLMATHQPCHFQRLGAVIR</sequence>